<accession>C4XSF4</accession>
<feature type="chain" id="PRO_1000206080" description="Ketol-acid reductoisomerase (NADP(+))">
    <location>
        <begin position="1"/>
        <end position="329"/>
    </location>
</feature>
<feature type="domain" description="KARI N-terminal Rossmann" evidence="2">
    <location>
        <begin position="1"/>
        <end position="181"/>
    </location>
</feature>
<feature type="domain" description="KARI C-terminal knotted" evidence="3">
    <location>
        <begin position="182"/>
        <end position="327"/>
    </location>
</feature>
<feature type="active site" evidence="1">
    <location>
        <position position="107"/>
    </location>
</feature>
<feature type="binding site" evidence="1">
    <location>
        <begin position="24"/>
        <end position="27"/>
    </location>
    <ligand>
        <name>NADP(+)</name>
        <dbReference type="ChEBI" id="CHEBI:58349"/>
    </ligand>
</feature>
<feature type="binding site" evidence="1">
    <location>
        <position position="47"/>
    </location>
    <ligand>
        <name>NADP(+)</name>
        <dbReference type="ChEBI" id="CHEBI:58349"/>
    </ligand>
</feature>
<feature type="binding site" evidence="1">
    <location>
        <begin position="82"/>
        <end position="85"/>
    </location>
    <ligand>
        <name>NADP(+)</name>
        <dbReference type="ChEBI" id="CHEBI:58349"/>
    </ligand>
</feature>
<feature type="binding site" evidence="1">
    <location>
        <position position="133"/>
    </location>
    <ligand>
        <name>NADP(+)</name>
        <dbReference type="ChEBI" id="CHEBI:58349"/>
    </ligand>
</feature>
<feature type="binding site" evidence="1">
    <location>
        <position position="190"/>
    </location>
    <ligand>
        <name>Mg(2+)</name>
        <dbReference type="ChEBI" id="CHEBI:18420"/>
        <label>1</label>
    </ligand>
</feature>
<feature type="binding site" evidence="1">
    <location>
        <position position="190"/>
    </location>
    <ligand>
        <name>Mg(2+)</name>
        <dbReference type="ChEBI" id="CHEBI:18420"/>
        <label>2</label>
    </ligand>
</feature>
<feature type="binding site" evidence="1">
    <location>
        <position position="194"/>
    </location>
    <ligand>
        <name>Mg(2+)</name>
        <dbReference type="ChEBI" id="CHEBI:18420"/>
        <label>1</label>
    </ligand>
</feature>
<feature type="binding site" evidence="1">
    <location>
        <position position="226"/>
    </location>
    <ligand>
        <name>Mg(2+)</name>
        <dbReference type="ChEBI" id="CHEBI:18420"/>
        <label>2</label>
    </ligand>
</feature>
<feature type="binding site" evidence="1">
    <location>
        <position position="230"/>
    </location>
    <ligand>
        <name>Mg(2+)</name>
        <dbReference type="ChEBI" id="CHEBI:18420"/>
        <label>2</label>
    </ligand>
</feature>
<feature type="binding site" evidence="1">
    <location>
        <position position="251"/>
    </location>
    <ligand>
        <name>substrate</name>
    </ligand>
</feature>
<organism>
    <name type="scientific">Solidesulfovibrio magneticus (strain ATCC 700980 / DSM 13731 / RS-1)</name>
    <name type="common">Desulfovibrio magneticus</name>
    <dbReference type="NCBI Taxonomy" id="573370"/>
    <lineage>
        <taxon>Bacteria</taxon>
        <taxon>Pseudomonadati</taxon>
        <taxon>Thermodesulfobacteriota</taxon>
        <taxon>Desulfovibrionia</taxon>
        <taxon>Desulfovibrionales</taxon>
        <taxon>Desulfovibrionaceae</taxon>
        <taxon>Solidesulfovibrio</taxon>
    </lineage>
</organism>
<reference key="1">
    <citation type="journal article" date="2009" name="Genome Res.">
        <title>Whole genome sequence of Desulfovibrio magneticus strain RS-1 revealed common gene clusters in magnetotactic bacteria.</title>
        <authorList>
            <person name="Nakazawa H."/>
            <person name="Arakaki A."/>
            <person name="Narita-Yamada S."/>
            <person name="Yashiro I."/>
            <person name="Jinno K."/>
            <person name="Aoki N."/>
            <person name="Tsuruyama A."/>
            <person name="Okamura Y."/>
            <person name="Tanikawa S."/>
            <person name="Fujita N."/>
            <person name="Takeyama H."/>
            <person name="Matsunaga T."/>
        </authorList>
    </citation>
    <scope>NUCLEOTIDE SEQUENCE [LARGE SCALE GENOMIC DNA]</scope>
    <source>
        <strain>ATCC 700980 / DSM 13731 / RS-1</strain>
    </source>
</reference>
<gene>
    <name evidence="1" type="primary">ilvC</name>
    <name type="ordered locus">DMR_21850</name>
</gene>
<dbReference type="EC" id="1.1.1.86" evidence="1"/>
<dbReference type="EMBL" id="AP010904">
    <property type="protein sequence ID" value="BAH75676.1"/>
    <property type="molecule type" value="Genomic_DNA"/>
</dbReference>
<dbReference type="RefSeq" id="WP_015860859.1">
    <property type="nucleotide sequence ID" value="NC_012796.1"/>
</dbReference>
<dbReference type="SMR" id="C4XSF4"/>
<dbReference type="STRING" id="573370.DMR_21850"/>
<dbReference type="KEGG" id="dma:DMR_21850"/>
<dbReference type="eggNOG" id="COG0059">
    <property type="taxonomic scope" value="Bacteria"/>
</dbReference>
<dbReference type="HOGENOM" id="CLU_033821_0_1_7"/>
<dbReference type="OrthoDB" id="9804088at2"/>
<dbReference type="UniPathway" id="UPA00047">
    <property type="reaction ID" value="UER00056"/>
</dbReference>
<dbReference type="UniPathway" id="UPA00049">
    <property type="reaction ID" value="UER00060"/>
</dbReference>
<dbReference type="Proteomes" id="UP000009071">
    <property type="component" value="Chromosome"/>
</dbReference>
<dbReference type="GO" id="GO:0005829">
    <property type="term" value="C:cytosol"/>
    <property type="evidence" value="ECO:0007669"/>
    <property type="project" value="TreeGrafter"/>
</dbReference>
<dbReference type="GO" id="GO:0004455">
    <property type="term" value="F:ketol-acid reductoisomerase activity"/>
    <property type="evidence" value="ECO:0007669"/>
    <property type="project" value="UniProtKB-UniRule"/>
</dbReference>
<dbReference type="GO" id="GO:0000287">
    <property type="term" value="F:magnesium ion binding"/>
    <property type="evidence" value="ECO:0007669"/>
    <property type="project" value="UniProtKB-UniRule"/>
</dbReference>
<dbReference type="GO" id="GO:0050661">
    <property type="term" value="F:NADP binding"/>
    <property type="evidence" value="ECO:0007669"/>
    <property type="project" value="InterPro"/>
</dbReference>
<dbReference type="GO" id="GO:0009097">
    <property type="term" value="P:isoleucine biosynthetic process"/>
    <property type="evidence" value="ECO:0007669"/>
    <property type="project" value="UniProtKB-UniRule"/>
</dbReference>
<dbReference type="GO" id="GO:0009099">
    <property type="term" value="P:L-valine biosynthetic process"/>
    <property type="evidence" value="ECO:0007669"/>
    <property type="project" value="UniProtKB-UniRule"/>
</dbReference>
<dbReference type="FunFam" id="3.40.50.720:FF:000023">
    <property type="entry name" value="Ketol-acid reductoisomerase (NADP(+))"/>
    <property type="match status" value="1"/>
</dbReference>
<dbReference type="Gene3D" id="6.10.240.10">
    <property type="match status" value="1"/>
</dbReference>
<dbReference type="Gene3D" id="3.40.50.720">
    <property type="entry name" value="NAD(P)-binding Rossmann-like Domain"/>
    <property type="match status" value="1"/>
</dbReference>
<dbReference type="HAMAP" id="MF_00435">
    <property type="entry name" value="IlvC"/>
    <property type="match status" value="1"/>
</dbReference>
<dbReference type="InterPro" id="IPR008927">
    <property type="entry name" value="6-PGluconate_DH-like_C_sf"/>
</dbReference>
<dbReference type="InterPro" id="IPR013023">
    <property type="entry name" value="KARI"/>
</dbReference>
<dbReference type="InterPro" id="IPR000506">
    <property type="entry name" value="KARI_C"/>
</dbReference>
<dbReference type="InterPro" id="IPR013116">
    <property type="entry name" value="KARI_N"/>
</dbReference>
<dbReference type="InterPro" id="IPR014359">
    <property type="entry name" value="KARI_prok"/>
</dbReference>
<dbReference type="InterPro" id="IPR036291">
    <property type="entry name" value="NAD(P)-bd_dom_sf"/>
</dbReference>
<dbReference type="NCBIfam" id="TIGR00465">
    <property type="entry name" value="ilvC"/>
    <property type="match status" value="1"/>
</dbReference>
<dbReference type="NCBIfam" id="NF004017">
    <property type="entry name" value="PRK05479.1"/>
    <property type="match status" value="1"/>
</dbReference>
<dbReference type="NCBIfam" id="NF009940">
    <property type="entry name" value="PRK13403.1"/>
    <property type="match status" value="1"/>
</dbReference>
<dbReference type="PANTHER" id="PTHR21371">
    <property type="entry name" value="KETOL-ACID REDUCTOISOMERASE, MITOCHONDRIAL"/>
    <property type="match status" value="1"/>
</dbReference>
<dbReference type="PANTHER" id="PTHR21371:SF1">
    <property type="entry name" value="KETOL-ACID REDUCTOISOMERASE, MITOCHONDRIAL"/>
    <property type="match status" value="1"/>
</dbReference>
<dbReference type="Pfam" id="PF01450">
    <property type="entry name" value="KARI_C"/>
    <property type="match status" value="1"/>
</dbReference>
<dbReference type="Pfam" id="PF07991">
    <property type="entry name" value="KARI_N"/>
    <property type="match status" value="1"/>
</dbReference>
<dbReference type="PIRSF" id="PIRSF000116">
    <property type="entry name" value="IlvC_gammaproteo"/>
    <property type="match status" value="1"/>
</dbReference>
<dbReference type="SUPFAM" id="SSF48179">
    <property type="entry name" value="6-phosphogluconate dehydrogenase C-terminal domain-like"/>
    <property type="match status" value="1"/>
</dbReference>
<dbReference type="SUPFAM" id="SSF51735">
    <property type="entry name" value="NAD(P)-binding Rossmann-fold domains"/>
    <property type="match status" value="1"/>
</dbReference>
<dbReference type="PROSITE" id="PS51851">
    <property type="entry name" value="KARI_C"/>
    <property type="match status" value="1"/>
</dbReference>
<dbReference type="PROSITE" id="PS51850">
    <property type="entry name" value="KARI_N"/>
    <property type="match status" value="1"/>
</dbReference>
<protein>
    <recommendedName>
        <fullName evidence="1">Ketol-acid reductoisomerase (NADP(+))</fullName>
        <shortName evidence="1">KARI</shortName>
        <ecNumber evidence="1">1.1.1.86</ecNumber>
    </recommendedName>
    <alternativeName>
        <fullName evidence="1">Acetohydroxy-acid isomeroreductase</fullName>
        <shortName evidence="1">AHIR</shortName>
    </alternativeName>
    <alternativeName>
        <fullName evidence="1">Alpha-keto-beta-hydroxylacyl reductoisomerase</fullName>
    </alternativeName>
    <alternativeName>
        <fullName evidence="1">Ketol-acid reductoisomerase type 1</fullName>
    </alternativeName>
    <alternativeName>
        <fullName evidence="1">Ketol-acid reductoisomerase type I</fullName>
    </alternativeName>
</protein>
<keyword id="KW-0028">Amino-acid biosynthesis</keyword>
<keyword id="KW-0100">Branched-chain amino acid biosynthesis</keyword>
<keyword id="KW-0460">Magnesium</keyword>
<keyword id="KW-0479">Metal-binding</keyword>
<keyword id="KW-0521">NADP</keyword>
<keyword id="KW-0560">Oxidoreductase</keyword>
<evidence type="ECO:0000255" key="1">
    <source>
        <dbReference type="HAMAP-Rule" id="MF_00435"/>
    </source>
</evidence>
<evidence type="ECO:0000255" key="2">
    <source>
        <dbReference type="PROSITE-ProRule" id="PRU01197"/>
    </source>
</evidence>
<evidence type="ECO:0000255" key="3">
    <source>
        <dbReference type="PROSITE-ProRule" id="PRU01198"/>
    </source>
</evidence>
<name>ILVC_SOLM1</name>
<proteinExistence type="inferred from homology"/>
<comment type="function">
    <text evidence="1">Involved in the biosynthesis of branched-chain amino acids (BCAA). Catalyzes an alkyl-migration followed by a ketol-acid reduction of (S)-2-acetolactate (S2AL) to yield (R)-2,3-dihydroxy-isovalerate. In the isomerase reaction, S2AL is rearranged via a Mg-dependent methyl migration to produce 3-hydroxy-3-methyl-2-ketobutyrate (HMKB). In the reductase reaction, this 2-ketoacid undergoes a metal-dependent reduction by NADPH to yield (R)-2,3-dihydroxy-isovalerate.</text>
</comment>
<comment type="catalytic activity">
    <reaction evidence="1">
        <text>(2R)-2,3-dihydroxy-3-methylbutanoate + NADP(+) = (2S)-2-acetolactate + NADPH + H(+)</text>
        <dbReference type="Rhea" id="RHEA:22068"/>
        <dbReference type="ChEBI" id="CHEBI:15378"/>
        <dbReference type="ChEBI" id="CHEBI:49072"/>
        <dbReference type="ChEBI" id="CHEBI:57783"/>
        <dbReference type="ChEBI" id="CHEBI:58349"/>
        <dbReference type="ChEBI" id="CHEBI:58476"/>
        <dbReference type="EC" id="1.1.1.86"/>
    </reaction>
</comment>
<comment type="catalytic activity">
    <reaction evidence="1">
        <text>(2R,3R)-2,3-dihydroxy-3-methylpentanoate + NADP(+) = (S)-2-ethyl-2-hydroxy-3-oxobutanoate + NADPH + H(+)</text>
        <dbReference type="Rhea" id="RHEA:13493"/>
        <dbReference type="ChEBI" id="CHEBI:15378"/>
        <dbReference type="ChEBI" id="CHEBI:49256"/>
        <dbReference type="ChEBI" id="CHEBI:49258"/>
        <dbReference type="ChEBI" id="CHEBI:57783"/>
        <dbReference type="ChEBI" id="CHEBI:58349"/>
        <dbReference type="EC" id="1.1.1.86"/>
    </reaction>
</comment>
<comment type="cofactor">
    <cofactor evidence="1">
        <name>Mg(2+)</name>
        <dbReference type="ChEBI" id="CHEBI:18420"/>
    </cofactor>
    <text evidence="1">Binds 2 magnesium ions per subunit.</text>
</comment>
<comment type="pathway">
    <text evidence="1">Amino-acid biosynthesis; L-isoleucine biosynthesis; L-isoleucine from 2-oxobutanoate: step 2/4.</text>
</comment>
<comment type="pathway">
    <text evidence="1">Amino-acid biosynthesis; L-valine biosynthesis; L-valine from pyruvate: step 2/4.</text>
</comment>
<comment type="similarity">
    <text evidence="1">Belongs to the ketol-acid reductoisomerase family.</text>
</comment>
<sequence>MKIYYDQDADLSLLADKTVAIIGYGSQGHAHAQNLRDSGVKVVIGQRPGGPNWELAKENGFTPMSAAEAAAAADLIMILVPDQHQKAVYEKDVLPHLKPGKMLLFAHGFNIHFQQIVPPADVDVAMVAPKGPGHLVRRVYTEGAGVPCLIAIHQNATGKAMETALAYAKGVGGTRGGVLTTTFKEETETDLFGEQAVLCGGAAELVKAGFETLCEAGYQPEIAYFECLHELKLIVDLMYEGGLSRMRYSISDTAEYGDYVSGPRVVTDETRAEMRQILKEIQDGTFARDFIMENMSGRAHFLSMRRINAEHPIEKVGAKLRGMMSWLKK</sequence>